<protein>
    <recommendedName>
        <fullName>Uncharacterized protein Rv1354c</fullName>
    </recommendedName>
</protein>
<accession>P9WM13</accession>
<accession>L0T6L7</accession>
<accession>P64825</accession>
<accession>Q11024</accession>
<organism>
    <name type="scientific">Mycobacterium tuberculosis (strain ATCC 25618 / H37Rv)</name>
    <dbReference type="NCBI Taxonomy" id="83332"/>
    <lineage>
        <taxon>Bacteria</taxon>
        <taxon>Bacillati</taxon>
        <taxon>Actinomycetota</taxon>
        <taxon>Actinomycetes</taxon>
        <taxon>Mycobacteriales</taxon>
        <taxon>Mycobacteriaceae</taxon>
        <taxon>Mycobacterium</taxon>
        <taxon>Mycobacterium tuberculosis complex</taxon>
    </lineage>
</organism>
<feature type="chain" id="PRO_0000103823" description="Uncharacterized protein Rv1354c">
    <location>
        <begin position="1"/>
        <end position="623"/>
    </location>
</feature>
<feature type="domain" description="GAF">
    <location>
        <begin position="28"/>
        <end position="171"/>
    </location>
</feature>
<feature type="domain" description="GGDEF" evidence="2">
    <location>
        <begin position="212"/>
        <end position="345"/>
    </location>
</feature>
<feature type="domain" description="EAL" evidence="1">
    <location>
        <begin position="354"/>
        <end position="609"/>
    </location>
</feature>
<evidence type="ECO:0000255" key="1">
    <source>
        <dbReference type="PROSITE-ProRule" id="PRU00074"/>
    </source>
</evidence>
<evidence type="ECO:0000255" key="2">
    <source>
        <dbReference type="PROSITE-ProRule" id="PRU00095"/>
    </source>
</evidence>
<gene>
    <name type="ordered locus">Rv1354c</name>
    <name type="ORF">MTCY02B10.18c</name>
</gene>
<proteinExistence type="predicted"/>
<sequence>MCNDTATPQLEELVTTVANQLMTVDAATSAEVSQRVLAYLVEQLGVDVSFLRHNDRDRRATRLVAEWPPRLNIPDPDPLRLIYFADADPVFALCEHAKEPLVFRPEPATEDYQRLIEEARGVPVTSAAAVPLVSGEITTGLLGFIKFGDRKWHEAELNALMTIATLFAQVQARVAAEARLRYLADHDDLTGLHNRRALLQHLDQRLAPGQPGPVAALFLDLDRLKAINDYLGHAAGDQFIHVFAQRIGDALVGESLIARLGGDEFVLIPASPMSADAAQPLAERLRDQLKDHVAIGGEVLTRTVSIGVASGTPGQHTPSDLLRRADQAALAAKHAGGDSVAIFTADMSVSGELRNDIELHLRRGIESDALRLVYLPEVDLRTGDIVGTEALVRWQHPTRGLLAPGCFIPVAESINLAGELDRWVLRRACNEFSEWQSAGLGHDALLRINVSAGQLVTGGFVDFVADTIGQHGLDASSVCLEITENVVVQDLHTARATLARLKEVGVHIAIDDFGTGYSAISLLQTLPIDTLKIDKTFVRQLGTNTSDLVIVRGIMTLAEGFQLDVVAEGVETEAAARILLDQRCYRAQGFLFSRPVPGEAMRHMLSARRLPPTCIPATDPALS</sequence>
<name>Y1354_MYCTU</name>
<reference key="1">
    <citation type="journal article" date="1998" name="Nature">
        <title>Deciphering the biology of Mycobacterium tuberculosis from the complete genome sequence.</title>
        <authorList>
            <person name="Cole S.T."/>
            <person name="Brosch R."/>
            <person name="Parkhill J."/>
            <person name="Garnier T."/>
            <person name="Churcher C.M."/>
            <person name="Harris D.E."/>
            <person name="Gordon S.V."/>
            <person name="Eiglmeier K."/>
            <person name="Gas S."/>
            <person name="Barry C.E. III"/>
            <person name="Tekaia F."/>
            <person name="Badcock K."/>
            <person name="Basham D."/>
            <person name="Brown D."/>
            <person name="Chillingworth T."/>
            <person name="Connor R."/>
            <person name="Davies R.M."/>
            <person name="Devlin K."/>
            <person name="Feltwell T."/>
            <person name="Gentles S."/>
            <person name="Hamlin N."/>
            <person name="Holroyd S."/>
            <person name="Hornsby T."/>
            <person name="Jagels K."/>
            <person name="Krogh A."/>
            <person name="McLean J."/>
            <person name="Moule S."/>
            <person name="Murphy L.D."/>
            <person name="Oliver S."/>
            <person name="Osborne J."/>
            <person name="Quail M.A."/>
            <person name="Rajandream M.A."/>
            <person name="Rogers J."/>
            <person name="Rutter S."/>
            <person name="Seeger K."/>
            <person name="Skelton S."/>
            <person name="Squares S."/>
            <person name="Squares R."/>
            <person name="Sulston J.E."/>
            <person name="Taylor K."/>
            <person name="Whitehead S."/>
            <person name="Barrell B.G."/>
        </authorList>
    </citation>
    <scope>NUCLEOTIDE SEQUENCE [LARGE SCALE GENOMIC DNA]</scope>
    <source>
        <strain>ATCC 25618 / H37Rv</strain>
    </source>
</reference>
<dbReference type="EMBL" id="AL123456">
    <property type="protein sequence ID" value="CCP44112.1"/>
    <property type="molecule type" value="Genomic_DNA"/>
</dbReference>
<dbReference type="PIR" id="A70741">
    <property type="entry name" value="A70741"/>
</dbReference>
<dbReference type="RefSeq" id="NP_215870.1">
    <property type="nucleotide sequence ID" value="NC_000962.3"/>
</dbReference>
<dbReference type="RefSeq" id="WP_003898837.1">
    <property type="nucleotide sequence ID" value="NZ_NVQJ01000031.1"/>
</dbReference>
<dbReference type="SMR" id="P9WM13"/>
<dbReference type="FunCoup" id="P9WM13">
    <property type="interactions" value="4"/>
</dbReference>
<dbReference type="STRING" id="83332.Rv1354c"/>
<dbReference type="PaxDb" id="83332-Rv1354c"/>
<dbReference type="DNASU" id="886829"/>
<dbReference type="GeneID" id="886829"/>
<dbReference type="KEGG" id="mtu:Rv1354c"/>
<dbReference type="KEGG" id="mtv:RVBD_1354c"/>
<dbReference type="TubercuList" id="Rv1354c"/>
<dbReference type="eggNOG" id="COG2203">
    <property type="taxonomic scope" value="Bacteria"/>
</dbReference>
<dbReference type="eggNOG" id="COG5001">
    <property type="taxonomic scope" value="Bacteria"/>
</dbReference>
<dbReference type="InParanoid" id="P9WM13"/>
<dbReference type="OrthoDB" id="23692at2"/>
<dbReference type="PhylomeDB" id="P9WM13"/>
<dbReference type="Proteomes" id="UP000001584">
    <property type="component" value="Chromosome"/>
</dbReference>
<dbReference type="GO" id="GO:0005886">
    <property type="term" value="C:plasma membrane"/>
    <property type="evidence" value="ECO:0007005"/>
    <property type="project" value="MTBBASE"/>
</dbReference>
<dbReference type="GO" id="GO:0071111">
    <property type="term" value="F:cyclic-guanylate-specific phosphodiesterase activity"/>
    <property type="evidence" value="ECO:0000314"/>
    <property type="project" value="MTBBASE"/>
</dbReference>
<dbReference type="GO" id="GO:0052621">
    <property type="term" value="F:diguanylate cyclase activity"/>
    <property type="evidence" value="ECO:0000314"/>
    <property type="project" value="MTBBASE"/>
</dbReference>
<dbReference type="GO" id="GO:0009190">
    <property type="term" value="P:cyclic nucleotide biosynthetic process"/>
    <property type="evidence" value="ECO:0000314"/>
    <property type="project" value="MTBBASE"/>
</dbReference>
<dbReference type="GO" id="GO:0009214">
    <property type="term" value="P:cyclic nucleotide catabolic process"/>
    <property type="evidence" value="ECO:0000314"/>
    <property type="project" value="MTBBASE"/>
</dbReference>
<dbReference type="CDD" id="cd01948">
    <property type="entry name" value="EAL"/>
    <property type="match status" value="1"/>
</dbReference>
<dbReference type="CDD" id="cd01949">
    <property type="entry name" value="GGDEF"/>
    <property type="match status" value="1"/>
</dbReference>
<dbReference type="Gene3D" id="3.30.450.40">
    <property type="match status" value="1"/>
</dbReference>
<dbReference type="Gene3D" id="3.30.70.270">
    <property type="match status" value="1"/>
</dbReference>
<dbReference type="Gene3D" id="3.20.20.450">
    <property type="entry name" value="EAL domain"/>
    <property type="match status" value="1"/>
</dbReference>
<dbReference type="InterPro" id="IPR050706">
    <property type="entry name" value="Cyclic-di-GMP_PDE-like"/>
</dbReference>
<dbReference type="InterPro" id="IPR001633">
    <property type="entry name" value="EAL_dom"/>
</dbReference>
<dbReference type="InterPro" id="IPR035919">
    <property type="entry name" value="EAL_sf"/>
</dbReference>
<dbReference type="InterPro" id="IPR003018">
    <property type="entry name" value="GAF"/>
</dbReference>
<dbReference type="InterPro" id="IPR029016">
    <property type="entry name" value="GAF-like_dom_sf"/>
</dbReference>
<dbReference type="InterPro" id="IPR000160">
    <property type="entry name" value="GGDEF_dom"/>
</dbReference>
<dbReference type="InterPro" id="IPR029787">
    <property type="entry name" value="Nucleotide_cyclase"/>
</dbReference>
<dbReference type="InterPro" id="IPR043128">
    <property type="entry name" value="Rev_trsase/Diguanyl_cyclase"/>
</dbReference>
<dbReference type="NCBIfam" id="TIGR00254">
    <property type="entry name" value="GGDEF"/>
    <property type="match status" value="1"/>
</dbReference>
<dbReference type="PANTHER" id="PTHR33121">
    <property type="entry name" value="CYCLIC DI-GMP PHOSPHODIESTERASE PDEF"/>
    <property type="match status" value="1"/>
</dbReference>
<dbReference type="PANTHER" id="PTHR33121:SF70">
    <property type="entry name" value="SIGNALING PROTEIN YKOW"/>
    <property type="match status" value="1"/>
</dbReference>
<dbReference type="Pfam" id="PF00563">
    <property type="entry name" value="EAL"/>
    <property type="match status" value="1"/>
</dbReference>
<dbReference type="Pfam" id="PF13185">
    <property type="entry name" value="GAF_2"/>
    <property type="match status" value="1"/>
</dbReference>
<dbReference type="Pfam" id="PF00990">
    <property type="entry name" value="GGDEF"/>
    <property type="match status" value="1"/>
</dbReference>
<dbReference type="SMART" id="SM00052">
    <property type="entry name" value="EAL"/>
    <property type="match status" value="1"/>
</dbReference>
<dbReference type="SMART" id="SM00065">
    <property type="entry name" value="GAF"/>
    <property type="match status" value="1"/>
</dbReference>
<dbReference type="SMART" id="SM00267">
    <property type="entry name" value="GGDEF"/>
    <property type="match status" value="1"/>
</dbReference>
<dbReference type="SUPFAM" id="SSF141868">
    <property type="entry name" value="EAL domain-like"/>
    <property type="match status" value="1"/>
</dbReference>
<dbReference type="SUPFAM" id="SSF55781">
    <property type="entry name" value="GAF domain-like"/>
    <property type="match status" value="1"/>
</dbReference>
<dbReference type="SUPFAM" id="SSF55073">
    <property type="entry name" value="Nucleotide cyclase"/>
    <property type="match status" value="1"/>
</dbReference>
<dbReference type="PROSITE" id="PS50883">
    <property type="entry name" value="EAL"/>
    <property type="match status" value="1"/>
</dbReference>
<dbReference type="PROSITE" id="PS50887">
    <property type="entry name" value="GGDEF"/>
    <property type="match status" value="1"/>
</dbReference>
<keyword id="KW-1185">Reference proteome</keyword>